<comment type="function">
    <text evidence="1">Catalyzes the hydrolysis of the amide bond of N(2)-acetylated L-amino acids. Cleaves the acetyl group from N-acetyl-L-ornithine to form L-ornithine, an intermediate in L-arginine biosynthesis pathway, and a branchpoint in the synthesis of polyamines.</text>
</comment>
<comment type="catalytic activity">
    <reaction evidence="1">
        <text>N(2)-acetyl-L-ornithine + H2O = L-ornithine + acetate</text>
        <dbReference type="Rhea" id="RHEA:15941"/>
        <dbReference type="ChEBI" id="CHEBI:15377"/>
        <dbReference type="ChEBI" id="CHEBI:30089"/>
        <dbReference type="ChEBI" id="CHEBI:46911"/>
        <dbReference type="ChEBI" id="CHEBI:57805"/>
        <dbReference type="EC" id="3.5.1.16"/>
    </reaction>
</comment>
<comment type="cofactor">
    <cofactor evidence="1">
        <name>Zn(2+)</name>
        <dbReference type="ChEBI" id="CHEBI:29105"/>
    </cofactor>
    <cofactor evidence="1">
        <name>Co(2+)</name>
        <dbReference type="ChEBI" id="CHEBI:48828"/>
    </cofactor>
    <text evidence="1">Binds 2 Zn(2+) or Co(2+) ions per subunit.</text>
</comment>
<comment type="cofactor">
    <cofactor evidence="1">
        <name>glutathione</name>
        <dbReference type="ChEBI" id="CHEBI:57925"/>
    </cofactor>
</comment>
<comment type="pathway">
    <text evidence="1">Amino-acid biosynthesis; L-arginine biosynthesis; L-ornithine from N(2)-acetyl-L-ornithine (linear): step 1/1.</text>
</comment>
<comment type="subunit">
    <text evidence="1">Homodimer.</text>
</comment>
<comment type="subcellular location">
    <subcellularLocation>
        <location evidence="1">Cytoplasm</location>
    </subcellularLocation>
</comment>
<comment type="similarity">
    <text evidence="1">Belongs to the peptidase M20A family. ArgE subfamily.</text>
</comment>
<evidence type="ECO:0000255" key="1">
    <source>
        <dbReference type="HAMAP-Rule" id="MF_01108"/>
    </source>
</evidence>
<name>ARGE_ALIFM</name>
<protein>
    <recommendedName>
        <fullName evidence="1">Acetylornithine deacetylase</fullName>
        <shortName evidence="1">AO</shortName>
        <shortName evidence="1">Acetylornithinase</shortName>
        <ecNumber evidence="1">3.5.1.16</ecNumber>
    </recommendedName>
    <alternativeName>
        <fullName evidence="1">N-acetylornithinase</fullName>
        <shortName evidence="1">NAO</shortName>
    </alternativeName>
</protein>
<gene>
    <name evidence="1" type="primary">argE</name>
    <name type="ordered locus">VFMJ11_2419</name>
</gene>
<feature type="chain" id="PRO_1000137082" description="Acetylornithine deacetylase">
    <location>
        <begin position="1"/>
        <end position="378"/>
    </location>
</feature>
<feature type="active site" evidence="1">
    <location>
        <position position="78"/>
    </location>
</feature>
<feature type="active site" evidence="1">
    <location>
        <position position="140"/>
    </location>
</feature>
<feature type="binding site" evidence="1">
    <location>
        <position position="76"/>
    </location>
    <ligand>
        <name>Zn(2+)</name>
        <dbReference type="ChEBI" id="CHEBI:29105"/>
        <label>1</label>
    </ligand>
</feature>
<feature type="binding site" evidence="1">
    <location>
        <position position="108"/>
    </location>
    <ligand>
        <name>Zn(2+)</name>
        <dbReference type="ChEBI" id="CHEBI:29105"/>
        <label>1</label>
    </ligand>
</feature>
<feature type="binding site" evidence="1">
    <location>
        <position position="108"/>
    </location>
    <ligand>
        <name>Zn(2+)</name>
        <dbReference type="ChEBI" id="CHEBI:29105"/>
        <label>2</label>
    </ligand>
</feature>
<feature type="binding site" evidence="1">
    <location>
        <position position="141"/>
    </location>
    <ligand>
        <name>Zn(2+)</name>
        <dbReference type="ChEBI" id="CHEBI:29105"/>
        <label>2</label>
    </ligand>
</feature>
<feature type="binding site" evidence="1">
    <location>
        <position position="165"/>
    </location>
    <ligand>
        <name>Zn(2+)</name>
        <dbReference type="ChEBI" id="CHEBI:29105"/>
        <label>1</label>
    </ligand>
</feature>
<feature type="binding site" evidence="1">
    <location>
        <position position="351"/>
    </location>
    <ligand>
        <name>Zn(2+)</name>
        <dbReference type="ChEBI" id="CHEBI:29105"/>
        <label>2</label>
    </ligand>
</feature>
<dbReference type="EC" id="3.5.1.16" evidence="1"/>
<dbReference type="EMBL" id="CP001139">
    <property type="protein sequence ID" value="ACH66706.1"/>
    <property type="molecule type" value="Genomic_DNA"/>
</dbReference>
<dbReference type="RefSeq" id="WP_005421127.1">
    <property type="nucleotide sequence ID" value="NC_011184.1"/>
</dbReference>
<dbReference type="SMR" id="B5FBP7"/>
<dbReference type="KEGG" id="vfm:VFMJ11_2419"/>
<dbReference type="HOGENOM" id="CLU_021802_2_4_6"/>
<dbReference type="UniPathway" id="UPA00068">
    <property type="reaction ID" value="UER00110"/>
</dbReference>
<dbReference type="Proteomes" id="UP000001857">
    <property type="component" value="Chromosome I"/>
</dbReference>
<dbReference type="GO" id="GO:0005737">
    <property type="term" value="C:cytoplasm"/>
    <property type="evidence" value="ECO:0007669"/>
    <property type="project" value="UniProtKB-SubCell"/>
</dbReference>
<dbReference type="GO" id="GO:0008777">
    <property type="term" value="F:acetylornithine deacetylase activity"/>
    <property type="evidence" value="ECO:0007669"/>
    <property type="project" value="UniProtKB-UniRule"/>
</dbReference>
<dbReference type="GO" id="GO:0008270">
    <property type="term" value="F:zinc ion binding"/>
    <property type="evidence" value="ECO:0007669"/>
    <property type="project" value="UniProtKB-UniRule"/>
</dbReference>
<dbReference type="GO" id="GO:0006526">
    <property type="term" value="P:L-arginine biosynthetic process"/>
    <property type="evidence" value="ECO:0007669"/>
    <property type="project" value="UniProtKB-UniRule"/>
</dbReference>
<dbReference type="CDD" id="cd03894">
    <property type="entry name" value="M20_ArgE"/>
    <property type="match status" value="1"/>
</dbReference>
<dbReference type="FunFam" id="3.30.70.360:FF:000003">
    <property type="entry name" value="Acetylornithine deacetylase"/>
    <property type="match status" value="1"/>
</dbReference>
<dbReference type="Gene3D" id="3.30.70.360">
    <property type="match status" value="1"/>
</dbReference>
<dbReference type="Gene3D" id="3.40.630.10">
    <property type="entry name" value="Zn peptidases"/>
    <property type="match status" value="1"/>
</dbReference>
<dbReference type="HAMAP" id="MF_01108">
    <property type="entry name" value="ArgE"/>
    <property type="match status" value="1"/>
</dbReference>
<dbReference type="InterPro" id="IPR010169">
    <property type="entry name" value="AcOrn-deacetyl"/>
</dbReference>
<dbReference type="InterPro" id="IPR001261">
    <property type="entry name" value="ArgE/DapE_CS"/>
</dbReference>
<dbReference type="InterPro" id="IPR036264">
    <property type="entry name" value="Bact_exopeptidase_dim_dom"/>
</dbReference>
<dbReference type="InterPro" id="IPR002933">
    <property type="entry name" value="Peptidase_M20"/>
</dbReference>
<dbReference type="InterPro" id="IPR011650">
    <property type="entry name" value="Peptidase_M20_dimer"/>
</dbReference>
<dbReference type="InterPro" id="IPR050072">
    <property type="entry name" value="Peptidase_M20A"/>
</dbReference>
<dbReference type="NCBIfam" id="TIGR01892">
    <property type="entry name" value="AcOrn-deacetyl"/>
    <property type="match status" value="1"/>
</dbReference>
<dbReference type="NCBIfam" id="NF003474">
    <property type="entry name" value="PRK05111.1"/>
    <property type="match status" value="1"/>
</dbReference>
<dbReference type="PANTHER" id="PTHR43808">
    <property type="entry name" value="ACETYLORNITHINE DEACETYLASE"/>
    <property type="match status" value="1"/>
</dbReference>
<dbReference type="PANTHER" id="PTHR43808:SF1">
    <property type="entry name" value="ACETYLORNITHINE DEACETYLASE"/>
    <property type="match status" value="1"/>
</dbReference>
<dbReference type="Pfam" id="PF07687">
    <property type="entry name" value="M20_dimer"/>
    <property type="match status" value="1"/>
</dbReference>
<dbReference type="Pfam" id="PF01546">
    <property type="entry name" value="Peptidase_M20"/>
    <property type="match status" value="1"/>
</dbReference>
<dbReference type="SUPFAM" id="SSF55031">
    <property type="entry name" value="Bacterial exopeptidase dimerisation domain"/>
    <property type="match status" value="1"/>
</dbReference>
<dbReference type="SUPFAM" id="SSF53187">
    <property type="entry name" value="Zn-dependent exopeptidases"/>
    <property type="match status" value="1"/>
</dbReference>
<dbReference type="PROSITE" id="PS00758">
    <property type="entry name" value="ARGE_DAPE_CPG2_1"/>
    <property type="match status" value="1"/>
</dbReference>
<dbReference type="PROSITE" id="PS00759">
    <property type="entry name" value="ARGE_DAPE_CPG2_2"/>
    <property type="match status" value="1"/>
</dbReference>
<keyword id="KW-0028">Amino-acid biosynthesis</keyword>
<keyword id="KW-0055">Arginine biosynthesis</keyword>
<keyword id="KW-0170">Cobalt</keyword>
<keyword id="KW-0963">Cytoplasm</keyword>
<keyword id="KW-0378">Hydrolase</keyword>
<keyword id="KW-0479">Metal-binding</keyword>
<keyword id="KW-0862">Zinc</keyword>
<sequence>MKFPEFKDYYQQLISTSSISSTDSSWDEGNAEVINKLAQWCEDLGCEVEIEEIEKGKLNLLAKLGSGEGGLLLAGHTDTVPYDEGRWNYEPHALTEANDRFYGLGTADMKGFFAFILEAIKNINWKDQSKPLYILATCDEETTMLGARHFASNTKIQPDYCIIGEPTSLKPIRGHKGHVANAIRVTGKSGHSSDPAHGVNALEIMNEIMFALMTLKNKLVKEYHNPGFSIPYPTLNLGHIHGGDSPNRICGCCELHYDVRPLPGISLDGLDNMLRDALKEVEAKWPGRIDITPLHEPIPGYECSADSPIVTSTADICGQDVETVNYCTEAPFLQDLCPTLVLGPGSIEQAHQPDEYLAFSFIDPTISVLSKLMYKHCF</sequence>
<proteinExistence type="inferred from homology"/>
<organism>
    <name type="scientific">Aliivibrio fischeri (strain MJ11)</name>
    <name type="common">Vibrio fischeri</name>
    <dbReference type="NCBI Taxonomy" id="388396"/>
    <lineage>
        <taxon>Bacteria</taxon>
        <taxon>Pseudomonadati</taxon>
        <taxon>Pseudomonadota</taxon>
        <taxon>Gammaproteobacteria</taxon>
        <taxon>Vibrionales</taxon>
        <taxon>Vibrionaceae</taxon>
        <taxon>Aliivibrio</taxon>
    </lineage>
</organism>
<reference key="1">
    <citation type="submission" date="2008-08" db="EMBL/GenBank/DDBJ databases">
        <title>Complete sequence of Vibrio fischeri strain MJ11.</title>
        <authorList>
            <person name="Mandel M.J."/>
            <person name="Stabb E.V."/>
            <person name="Ruby E.G."/>
            <person name="Ferriera S."/>
            <person name="Johnson J."/>
            <person name="Kravitz S."/>
            <person name="Beeson K."/>
            <person name="Sutton G."/>
            <person name="Rogers Y.-H."/>
            <person name="Friedman R."/>
            <person name="Frazier M."/>
            <person name="Venter J.C."/>
        </authorList>
    </citation>
    <scope>NUCLEOTIDE SEQUENCE [LARGE SCALE GENOMIC DNA]</scope>
    <source>
        <strain>MJ11</strain>
    </source>
</reference>
<accession>B5FBP7</accession>